<name>DHEB_HALSA</name>
<accession>P0DMG4</accession>
<accession>Q5MBG0</accession>
<accession>Q9HSM4</accession>
<reference key="1">
    <citation type="journal article" date="2000" name="Proc. Natl. Acad. Sci. U.S.A.">
        <title>Genome sequence of Halobacterium species NRC-1.</title>
        <authorList>
            <person name="Ng W.V."/>
            <person name="Kennedy S.P."/>
            <person name="Mahairas G.G."/>
            <person name="Berquist B."/>
            <person name="Pan M."/>
            <person name="Shukla H.D."/>
            <person name="Lasky S.R."/>
            <person name="Baliga N.S."/>
            <person name="Thorsson V."/>
            <person name="Sbrogna J."/>
            <person name="Swartzell S."/>
            <person name="Weir D."/>
            <person name="Hall J."/>
            <person name="Dahl T.A."/>
            <person name="Welti R."/>
            <person name="Goo Y.A."/>
            <person name="Leithauser B."/>
            <person name="Keller K."/>
            <person name="Cruz R."/>
            <person name="Danson M.J."/>
            <person name="Hough D.W."/>
            <person name="Maddocks D.G."/>
            <person name="Jablonski P.E."/>
            <person name="Krebs M.P."/>
            <person name="Angevine C.M."/>
            <person name="Dale H."/>
            <person name="Isenbarger T.A."/>
            <person name="Peck R.F."/>
            <person name="Pohlschroder M."/>
            <person name="Spudich J.L."/>
            <person name="Jung K.-H."/>
            <person name="Alam M."/>
            <person name="Freitas T."/>
            <person name="Hou S."/>
            <person name="Daniels C.J."/>
            <person name="Dennis P.P."/>
            <person name="Omer A.D."/>
            <person name="Ebhardt H."/>
            <person name="Lowe T.M."/>
            <person name="Liang P."/>
            <person name="Riley M."/>
            <person name="Hood L."/>
            <person name="DasSarma S."/>
        </authorList>
    </citation>
    <scope>NUCLEOTIDE SEQUENCE [LARGE SCALE GENOMIC DNA]</scope>
    <source>
        <strain>ATCC 700922 / JCM 11081 / NRC-1</strain>
    </source>
</reference>
<reference key="2">
    <citation type="journal article" date="2005" name="Gene">
        <title>The discovery of four distinct glutamate dehydrogenase genes in a strain of Halobacterium salinarum.</title>
        <authorList>
            <person name="Ingoldsby L.M."/>
            <person name="Geoghegan K.F."/>
            <person name="Hayden B.M."/>
            <person name="Engel P.C."/>
        </authorList>
    </citation>
    <scope>IDENTIFICATION</scope>
    <source>
        <strain>ATCC 700922 / JCM 11081 / NRC-1</strain>
    </source>
</reference>
<keyword id="KW-0560">Oxidoreductase</keyword>
<keyword id="KW-1185">Reference proteome</keyword>
<sequence length="429" mass="45968">MAQTPPPESAPSTDSEPETALETARRQLQAAAEHVDIADGVIERLTHPTRVVQVSVPVERDDGTVTVYDGYRAQHDDVRGPYKGGLRYHPGVSAEECVGLSMWMTWKCAVMDLPFGGAKGGVVVDPKTLSADEHERLTRRFAAELRDEVGPSQDIPAPDMGTDAQTMAWFMDAYSMQQGETVPGVVTGKPPVAGGSHGRAEAPGRSVAIATREAINYYDIPIDDATVAVQGYGSVGANAALLLDDWGARVVAVSDVNGGVLDTDGLDTHAIPSHGNQPAAVMRHDAPNTLTNEELLELDVDVVIPAAVGNVITAANADRIQADIVVEGANGPTTSAADRILEERAVPVIPDILANAGGVTVSYFEWLQDINRRTWSPERVRDELESEMLSAWNAVRSEVDDGDLSWRDAAYVVALQRIGRAKEARGLWP</sequence>
<dbReference type="EC" id="1.4.1.-"/>
<dbReference type="EMBL" id="AE004437">
    <property type="protein sequence ID" value="AAG18779.1"/>
    <property type="molecule type" value="Genomic_DNA"/>
</dbReference>
<dbReference type="PIR" id="G84176">
    <property type="entry name" value="G84176"/>
</dbReference>
<dbReference type="RefSeq" id="WP_010902074.1">
    <property type="nucleotide sequence ID" value="NC_002607.1"/>
</dbReference>
<dbReference type="SMR" id="P0DMG4"/>
<dbReference type="STRING" id="64091.VNG_0161G"/>
<dbReference type="PaxDb" id="64091-VNG_0161G"/>
<dbReference type="GeneID" id="68693139"/>
<dbReference type="KEGG" id="hal:VNG_0161G"/>
<dbReference type="PATRIC" id="fig|64091.14.peg.115"/>
<dbReference type="HOGENOM" id="CLU_025763_1_2_2"/>
<dbReference type="InParanoid" id="P0DMG4"/>
<dbReference type="OrthoDB" id="6425at2157"/>
<dbReference type="PhylomeDB" id="P0DMG4"/>
<dbReference type="Proteomes" id="UP000000554">
    <property type="component" value="Chromosome"/>
</dbReference>
<dbReference type="GO" id="GO:0004352">
    <property type="term" value="F:glutamate dehydrogenase (NAD+) activity"/>
    <property type="evidence" value="ECO:0000318"/>
    <property type="project" value="GO_Central"/>
</dbReference>
<dbReference type="GO" id="GO:0006538">
    <property type="term" value="P:glutamate catabolic process"/>
    <property type="evidence" value="ECO:0000318"/>
    <property type="project" value="GO_Central"/>
</dbReference>
<dbReference type="CDD" id="cd01076">
    <property type="entry name" value="NAD_bind_1_Glu_DH"/>
    <property type="match status" value="1"/>
</dbReference>
<dbReference type="FunFam" id="3.40.50.10860:FF:000003">
    <property type="entry name" value="Glutamate dehydrogenase"/>
    <property type="match status" value="1"/>
</dbReference>
<dbReference type="Gene3D" id="3.40.50.10860">
    <property type="entry name" value="Leucine Dehydrogenase, chain A, domain 1"/>
    <property type="match status" value="1"/>
</dbReference>
<dbReference type="Gene3D" id="3.40.50.720">
    <property type="entry name" value="NAD(P)-binding Rossmann-like Domain"/>
    <property type="match status" value="1"/>
</dbReference>
<dbReference type="InterPro" id="IPR046346">
    <property type="entry name" value="Aminoacid_DH-like_N_sf"/>
</dbReference>
<dbReference type="InterPro" id="IPR006095">
    <property type="entry name" value="Glu/Leu/Phe/Val/Trp_DH"/>
</dbReference>
<dbReference type="InterPro" id="IPR006096">
    <property type="entry name" value="Glu/Leu/Phe/Val/Trp_DH_C"/>
</dbReference>
<dbReference type="InterPro" id="IPR006097">
    <property type="entry name" value="Glu/Leu/Phe/Val/Trp_DH_dimer"/>
</dbReference>
<dbReference type="InterPro" id="IPR033524">
    <property type="entry name" value="Glu/Leu/Phe/Val_DH_AS"/>
</dbReference>
<dbReference type="InterPro" id="IPR014362">
    <property type="entry name" value="Glu_DH"/>
</dbReference>
<dbReference type="InterPro" id="IPR054867">
    <property type="entry name" value="GluDhGdhB"/>
</dbReference>
<dbReference type="InterPro" id="IPR036291">
    <property type="entry name" value="NAD(P)-bd_dom_sf"/>
</dbReference>
<dbReference type="InterPro" id="IPR033922">
    <property type="entry name" value="NAD_bind_Glu_DH"/>
</dbReference>
<dbReference type="NCBIfam" id="NF041398">
    <property type="entry name" value="GluDhGdhB_Halo"/>
    <property type="match status" value="1"/>
</dbReference>
<dbReference type="PANTHER" id="PTHR11606">
    <property type="entry name" value="GLUTAMATE DEHYDROGENASE"/>
    <property type="match status" value="1"/>
</dbReference>
<dbReference type="PANTHER" id="PTHR11606:SF13">
    <property type="entry name" value="GLUTAMATE DEHYDROGENASE 1, MITOCHONDRIAL"/>
    <property type="match status" value="1"/>
</dbReference>
<dbReference type="Pfam" id="PF00208">
    <property type="entry name" value="ELFV_dehydrog"/>
    <property type="match status" value="1"/>
</dbReference>
<dbReference type="Pfam" id="PF02812">
    <property type="entry name" value="ELFV_dehydrog_N"/>
    <property type="match status" value="1"/>
</dbReference>
<dbReference type="PIRSF" id="PIRSF000185">
    <property type="entry name" value="Glu_DH"/>
    <property type="match status" value="1"/>
</dbReference>
<dbReference type="PRINTS" id="PR00082">
    <property type="entry name" value="GLFDHDRGNASE"/>
</dbReference>
<dbReference type="SMART" id="SM00839">
    <property type="entry name" value="ELFV_dehydrog"/>
    <property type="match status" value="1"/>
</dbReference>
<dbReference type="SUPFAM" id="SSF53223">
    <property type="entry name" value="Aminoacid dehydrogenase-like, N-terminal domain"/>
    <property type="match status" value="1"/>
</dbReference>
<dbReference type="SUPFAM" id="SSF51735">
    <property type="entry name" value="NAD(P)-binding Rossmann-fold domains"/>
    <property type="match status" value="1"/>
</dbReference>
<dbReference type="PROSITE" id="PS00074">
    <property type="entry name" value="GLFV_DEHYDROGENASE"/>
    <property type="match status" value="1"/>
</dbReference>
<feature type="chain" id="PRO_0000428793" description="Glutamate dehydrogenase B">
    <location>
        <begin position="1"/>
        <end position="429"/>
    </location>
</feature>
<feature type="region of interest" description="Disordered" evidence="3">
    <location>
        <begin position="1"/>
        <end position="20"/>
    </location>
</feature>
<feature type="active site" evidence="2">
    <location>
        <position position="119"/>
    </location>
</feature>
<evidence type="ECO:0000250" key="1"/>
<evidence type="ECO:0000255" key="2">
    <source>
        <dbReference type="PROSITE-ProRule" id="PRU10011"/>
    </source>
</evidence>
<evidence type="ECO:0000256" key="3">
    <source>
        <dbReference type="SAM" id="MobiDB-lite"/>
    </source>
</evidence>
<evidence type="ECO:0000305" key="4"/>
<evidence type="ECO:0000305" key="5">
    <source>
    </source>
</evidence>
<protein>
    <recommendedName>
        <fullName>Glutamate dehydrogenase B</fullName>
        <shortName>GDH B</shortName>
        <ecNumber>1.4.1.-</ecNumber>
    </recommendedName>
</protein>
<organism>
    <name type="scientific">Halobacterium salinarum (strain ATCC 700922 / JCM 11081 / NRC-1)</name>
    <name type="common">Halobacterium halobium</name>
    <dbReference type="NCBI Taxonomy" id="64091"/>
    <lineage>
        <taxon>Archaea</taxon>
        <taxon>Methanobacteriati</taxon>
        <taxon>Methanobacteriota</taxon>
        <taxon>Stenosarchaea group</taxon>
        <taxon>Halobacteria</taxon>
        <taxon>Halobacteriales</taxon>
        <taxon>Halobacteriaceae</taxon>
        <taxon>Halobacterium</taxon>
        <taxon>Halobacterium salinarum NRC-34001</taxon>
    </lineage>
</organism>
<proteinExistence type="inferred from homology"/>
<comment type="subunit">
    <text evidence="1">Homohexamer.</text>
</comment>
<comment type="miscellaneous">
    <text evidence="5">Strain NRC-36014 contains 4 distinct glutamate dehydrogenases while strain NRC-1 contains only 3.</text>
</comment>
<comment type="similarity">
    <text evidence="4">Belongs to the Glu/Leu/Phe/Val dehydrogenases family.</text>
</comment>
<gene>
    <name type="primary">gdhB</name>
    <name type="ordered locus">VNG_0161G</name>
</gene>